<dbReference type="EC" id="5.2.1.8"/>
<dbReference type="EMBL" id="AE002098">
    <property type="protein sequence ID" value="AAF41688.1"/>
    <property type="molecule type" value="Genomic_DNA"/>
</dbReference>
<dbReference type="PIR" id="G81098">
    <property type="entry name" value="G81098"/>
</dbReference>
<dbReference type="RefSeq" id="NP_274332.1">
    <property type="nucleotide sequence ID" value="NC_003112.2"/>
</dbReference>
<dbReference type="SMR" id="Q9JZ37"/>
<dbReference type="FunCoup" id="Q9JZ37">
    <property type="interactions" value="586"/>
</dbReference>
<dbReference type="STRING" id="122586.NMB1313"/>
<dbReference type="PaxDb" id="122586-NMB1313"/>
<dbReference type="KEGG" id="nme:NMB1313"/>
<dbReference type="PATRIC" id="fig|122586.8.peg.1647"/>
<dbReference type="HOGENOM" id="CLU_033058_2_0_4"/>
<dbReference type="InParanoid" id="Q9JZ37"/>
<dbReference type="OrthoDB" id="9767721at2"/>
<dbReference type="Proteomes" id="UP000000425">
    <property type="component" value="Chromosome"/>
</dbReference>
<dbReference type="GO" id="GO:0005737">
    <property type="term" value="C:cytoplasm"/>
    <property type="evidence" value="ECO:0007669"/>
    <property type="project" value="UniProtKB-SubCell"/>
</dbReference>
<dbReference type="GO" id="GO:0003755">
    <property type="term" value="F:peptidyl-prolyl cis-trans isomerase activity"/>
    <property type="evidence" value="ECO:0000318"/>
    <property type="project" value="GO_Central"/>
</dbReference>
<dbReference type="GO" id="GO:0044183">
    <property type="term" value="F:protein folding chaperone"/>
    <property type="evidence" value="ECO:0000318"/>
    <property type="project" value="GO_Central"/>
</dbReference>
<dbReference type="GO" id="GO:0043022">
    <property type="term" value="F:ribosome binding"/>
    <property type="evidence" value="ECO:0000318"/>
    <property type="project" value="GO_Central"/>
</dbReference>
<dbReference type="GO" id="GO:0051083">
    <property type="term" value="P:'de novo' cotranslational protein folding"/>
    <property type="evidence" value="ECO:0000318"/>
    <property type="project" value="GO_Central"/>
</dbReference>
<dbReference type="GO" id="GO:0051301">
    <property type="term" value="P:cell division"/>
    <property type="evidence" value="ECO:0007669"/>
    <property type="project" value="UniProtKB-KW"/>
</dbReference>
<dbReference type="GO" id="GO:0061077">
    <property type="term" value="P:chaperone-mediated protein folding"/>
    <property type="evidence" value="ECO:0000318"/>
    <property type="project" value="GO_Central"/>
</dbReference>
<dbReference type="GO" id="GO:0015031">
    <property type="term" value="P:protein transport"/>
    <property type="evidence" value="ECO:0007669"/>
    <property type="project" value="UniProtKB-UniRule"/>
</dbReference>
<dbReference type="GO" id="GO:0043335">
    <property type="term" value="P:protein unfolding"/>
    <property type="evidence" value="ECO:0000318"/>
    <property type="project" value="GO_Central"/>
</dbReference>
<dbReference type="FunFam" id="3.10.50.40:FF:000001">
    <property type="entry name" value="Trigger factor"/>
    <property type="match status" value="1"/>
</dbReference>
<dbReference type="FunFam" id="3.30.70.1050:FF:000007">
    <property type="entry name" value="Trigger factor"/>
    <property type="match status" value="1"/>
</dbReference>
<dbReference type="Gene3D" id="3.10.50.40">
    <property type="match status" value="1"/>
</dbReference>
<dbReference type="Gene3D" id="3.30.70.1050">
    <property type="entry name" value="Trigger factor ribosome-binding domain"/>
    <property type="match status" value="1"/>
</dbReference>
<dbReference type="Gene3D" id="1.10.3120.10">
    <property type="entry name" value="Trigger factor, C-terminal domain"/>
    <property type="match status" value="1"/>
</dbReference>
<dbReference type="HAMAP" id="MF_00303">
    <property type="entry name" value="Trigger_factor_Tig"/>
    <property type="match status" value="1"/>
</dbReference>
<dbReference type="InterPro" id="IPR046357">
    <property type="entry name" value="PPIase_dom_sf"/>
</dbReference>
<dbReference type="InterPro" id="IPR001179">
    <property type="entry name" value="PPIase_FKBP_dom"/>
</dbReference>
<dbReference type="InterPro" id="IPR005215">
    <property type="entry name" value="Trig_fac"/>
</dbReference>
<dbReference type="InterPro" id="IPR008880">
    <property type="entry name" value="Trigger_fac_C"/>
</dbReference>
<dbReference type="InterPro" id="IPR037041">
    <property type="entry name" value="Trigger_fac_C_sf"/>
</dbReference>
<dbReference type="InterPro" id="IPR008881">
    <property type="entry name" value="Trigger_fac_ribosome-bd_bac"/>
</dbReference>
<dbReference type="InterPro" id="IPR036611">
    <property type="entry name" value="Trigger_fac_ribosome-bd_sf"/>
</dbReference>
<dbReference type="InterPro" id="IPR027304">
    <property type="entry name" value="Trigger_fact/SurA_dom_sf"/>
</dbReference>
<dbReference type="NCBIfam" id="TIGR00115">
    <property type="entry name" value="tig"/>
    <property type="match status" value="1"/>
</dbReference>
<dbReference type="PANTHER" id="PTHR30560">
    <property type="entry name" value="TRIGGER FACTOR CHAPERONE AND PEPTIDYL-PROLYL CIS/TRANS ISOMERASE"/>
    <property type="match status" value="1"/>
</dbReference>
<dbReference type="PANTHER" id="PTHR30560:SF3">
    <property type="entry name" value="TRIGGER FACTOR-LIKE PROTEIN TIG, CHLOROPLASTIC"/>
    <property type="match status" value="1"/>
</dbReference>
<dbReference type="Pfam" id="PF00254">
    <property type="entry name" value="FKBP_C"/>
    <property type="match status" value="1"/>
</dbReference>
<dbReference type="Pfam" id="PF05698">
    <property type="entry name" value="Trigger_C"/>
    <property type="match status" value="1"/>
</dbReference>
<dbReference type="Pfam" id="PF05697">
    <property type="entry name" value="Trigger_N"/>
    <property type="match status" value="1"/>
</dbReference>
<dbReference type="PIRSF" id="PIRSF003095">
    <property type="entry name" value="Trigger_factor"/>
    <property type="match status" value="1"/>
</dbReference>
<dbReference type="SUPFAM" id="SSF54534">
    <property type="entry name" value="FKBP-like"/>
    <property type="match status" value="1"/>
</dbReference>
<dbReference type="SUPFAM" id="SSF109998">
    <property type="entry name" value="Triger factor/SurA peptide-binding domain-like"/>
    <property type="match status" value="1"/>
</dbReference>
<dbReference type="SUPFAM" id="SSF102735">
    <property type="entry name" value="Trigger factor ribosome-binding domain"/>
    <property type="match status" value="1"/>
</dbReference>
<dbReference type="PROSITE" id="PS50059">
    <property type="entry name" value="FKBP_PPIASE"/>
    <property type="match status" value="1"/>
</dbReference>
<evidence type="ECO:0000250" key="1"/>
<evidence type="ECO:0000305" key="2"/>
<reference key="1">
    <citation type="journal article" date="2000" name="Science">
        <title>Complete genome sequence of Neisseria meningitidis serogroup B strain MC58.</title>
        <authorList>
            <person name="Tettelin H."/>
            <person name="Saunders N.J."/>
            <person name="Heidelberg J.F."/>
            <person name="Jeffries A.C."/>
            <person name="Nelson K.E."/>
            <person name="Eisen J.A."/>
            <person name="Ketchum K.A."/>
            <person name="Hood D.W."/>
            <person name="Peden J.F."/>
            <person name="Dodson R.J."/>
            <person name="Nelson W.C."/>
            <person name="Gwinn M.L."/>
            <person name="DeBoy R.T."/>
            <person name="Peterson J.D."/>
            <person name="Hickey E.K."/>
            <person name="Haft D.H."/>
            <person name="Salzberg S.L."/>
            <person name="White O."/>
            <person name="Fleischmann R.D."/>
            <person name="Dougherty B.A."/>
            <person name="Mason T.M."/>
            <person name="Ciecko A."/>
            <person name="Parksey D.S."/>
            <person name="Blair E."/>
            <person name="Cittone H."/>
            <person name="Clark E.B."/>
            <person name="Cotton M.D."/>
            <person name="Utterback T.R."/>
            <person name="Khouri H.M."/>
            <person name="Qin H."/>
            <person name="Vamathevan J.J."/>
            <person name="Gill J."/>
            <person name="Scarlato V."/>
            <person name="Masignani V."/>
            <person name="Pizza M."/>
            <person name="Grandi G."/>
            <person name="Sun L."/>
            <person name="Smith H.O."/>
            <person name="Fraser C.M."/>
            <person name="Moxon E.R."/>
            <person name="Rappuoli R."/>
            <person name="Venter J.C."/>
        </authorList>
    </citation>
    <scope>NUCLEOTIDE SEQUENCE [LARGE SCALE GENOMIC DNA]</scope>
    <source>
        <strain>ATCC BAA-335 / MC58</strain>
    </source>
</reference>
<reference key="2">
    <citation type="journal article" date="2006" name="Proteomics">
        <title>Proteomic analysis of a meningococcal outer membrane vesicle vaccine prepared from the group B strain NZ98/254.</title>
        <authorList>
            <person name="Vipond C."/>
            <person name="Suker J."/>
            <person name="Jones C."/>
            <person name="Tang C."/>
            <person name="Feavers I.M."/>
            <person name="Wheeler J.X."/>
        </authorList>
    </citation>
    <scope>IDENTIFICATION BY MASS SPECTROMETRY [LARGE SCALE ANALYSIS]</scope>
    <source>
        <strain>NZ98/254 / Serogroup B</strain>
    </source>
</reference>
<protein>
    <recommendedName>
        <fullName>Trigger factor</fullName>
        <shortName>TF</shortName>
        <ecNumber>5.2.1.8</ecNumber>
    </recommendedName>
    <alternativeName>
        <fullName>PPIase</fullName>
    </alternativeName>
</protein>
<keyword id="KW-0131">Cell cycle</keyword>
<keyword id="KW-0132">Cell division</keyword>
<keyword id="KW-0143">Chaperone</keyword>
<keyword id="KW-0963">Cytoplasm</keyword>
<keyword id="KW-0413">Isomerase</keyword>
<keyword id="KW-1185">Reference proteome</keyword>
<keyword id="KW-0697">Rotamase</keyword>
<name>TIG_NEIMB</name>
<organism>
    <name type="scientific">Neisseria meningitidis serogroup B (strain ATCC BAA-335 / MC58)</name>
    <dbReference type="NCBI Taxonomy" id="122586"/>
    <lineage>
        <taxon>Bacteria</taxon>
        <taxon>Pseudomonadati</taxon>
        <taxon>Pseudomonadota</taxon>
        <taxon>Betaproteobacteria</taxon>
        <taxon>Neisseriales</taxon>
        <taxon>Neisseriaceae</taxon>
        <taxon>Neisseria</taxon>
    </lineage>
</organism>
<sequence length="437" mass="48325">MMSVTVETLENLERKVVLSLPWSEINAETDKKLKQTQRRAKIDGFRPGKAPLKMIAQMYGASAQNDVINELVQRRFYDVAVAQELKVAGFPRFEGVEEQDDKESFKVAAIFEVFPEVVIGDLSAQEVEKVTASVGDAEVDQTVEILRKQRTRFNHVEREARNGDRVIIDFEGKIDGEPFAGGASKNYAFVLGASQMLPEFEAGVVGMKAGESKDVTVNFPEDYHGKDVAGKTAVFTITLNNVSEATLPEVDADFAKALGIADGDVAKMREEVQKNVSREVERRVNEQTKESVMNALLKAVELKAPVALVNEEAARLANEMKQNFVNQGMADAANLDLPLDMFKEQAERRVSLGLILAKLVDENKLEPTEEQIKAVVANFAESYEDPQEVIDWYYADPSRLQAPTSLAVESNVVDFVLGKAKVNEKALSFDEVMGAQA</sequence>
<proteinExistence type="evidence at protein level"/>
<comment type="function">
    <text evidence="1">Involved in protein export. Acts as a chaperone by maintaining the newly synthesized protein in an open conformation. Functions as a peptidyl-prolyl cis-trans isomerase (By similarity).</text>
</comment>
<comment type="catalytic activity">
    <reaction>
        <text>[protein]-peptidylproline (omega=180) = [protein]-peptidylproline (omega=0)</text>
        <dbReference type="Rhea" id="RHEA:16237"/>
        <dbReference type="Rhea" id="RHEA-COMP:10747"/>
        <dbReference type="Rhea" id="RHEA-COMP:10748"/>
        <dbReference type="ChEBI" id="CHEBI:83833"/>
        <dbReference type="ChEBI" id="CHEBI:83834"/>
        <dbReference type="EC" id="5.2.1.8"/>
    </reaction>
</comment>
<comment type="subcellular location">
    <subcellularLocation>
        <location>Cytoplasm</location>
    </subcellularLocation>
    <text evidence="1">About half TF is bound to the ribosome near the polypeptide exit tunnel while the other half is free in the cytoplasm.</text>
</comment>
<comment type="domain">
    <text evidence="1">Consists of 3 domains; the N-terminus binds the ribosome, the middle domain has PPIase activity, while the C-terminus has intrinsic chaperone activity on its own.</text>
</comment>
<comment type="miscellaneous">
    <text>Present in outer membrane vesicle formulations which are used as vaccines in human.</text>
</comment>
<comment type="similarity">
    <text evidence="2">Belongs to the FKBP-type PPIase family. Tig subfamily.</text>
</comment>
<gene>
    <name type="primary">tig</name>
    <name type="ordered locus">NMB1313</name>
</gene>
<accession>Q9JZ37</accession>
<feature type="chain" id="PRO_0000179394" description="Trigger factor">
    <location>
        <begin position="1"/>
        <end position="437"/>
    </location>
</feature>
<feature type="domain" description="PPIase FKBP-type">
    <location>
        <begin position="163"/>
        <end position="248"/>
    </location>
</feature>